<accession>P0A3X7</accession>
<accession>P28596</accession>
<evidence type="ECO:0000250" key="1"/>
<evidence type="ECO:0000305" key="2"/>
<evidence type="ECO:0007829" key="3">
    <source>
        <dbReference type="PDB" id="4GYD"/>
    </source>
</evidence>
<evidence type="ECO:0007829" key="4">
    <source>
        <dbReference type="PDB" id="4H0K"/>
    </source>
</evidence>
<name>CYC6_NOSS1</name>
<comment type="function">
    <text evidence="1">Functions as an electron carrier between membrane-bound cytochrome b6-f and photosystem I in oxygenic photosynthesis.</text>
</comment>
<comment type="subunit">
    <text evidence="1">Monomer.</text>
</comment>
<comment type="subcellular location">
    <subcellularLocation>
        <location evidence="2">Cellular thylakoid lumen</location>
    </subcellularLocation>
</comment>
<comment type="PTM">
    <text evidence="1">Binds 1 heme c group covalently per subunit.</text>
</comment>
<comment type="similarity">
    <text evidence="2">Belongs to the cytochrome c family. PetJ subfamily.</text>
</comment>
<keyword id="KW-0002">3D-structure</keyword>
<keyword id="KW-0249">Electron transport</keyword>
<keyword id="KW-0349">Heme</keyword>
<keyword id="KW-0408">Iron</keyword>
<keyword id="KW-0479">Metal-binding</keyword>
<keyword id="KW-0602">Photosynthesis</keyword>
<keyword id="KW-1185">Reference proteome</keyword>
<keyword id="KW-0732">Signal</keyword>
<keyword id="KW-0793">Thylakoid</keyword>
<keyword id="KW-0813">Transport</keyword>
<sequence>MKKIFSLVLLGIALFTFAFSSPALAADSVNGAKIFSANCASCHAGGKNLVQAQKTLKKADLEKYGMYSAEAIIAQVTNGKNAMPAFKGRLKPEQIEDVAAYVLGKADADWK</sequence>
<protein>
    <recommendedName>
        <fullName>Cytochrome c6</fullName>
    </recommendedName>
    <alternativeName>
        <fullName>Cytochrome c-553</fullName>
    </alternativeName>
    <alternativeName>
        <fullName>Cytochrome c553</fullName>
    </alternativeName>
    <alternativeName>
        <fullName>Soluble cytochrome f</fullName>
    </alternativeName>
</protein>
<organism>
    <name type="scientific">Nostoc sp. (strain PCC 7120 / SAG 25.82 / UTEX 2576)</name>
    <dbReference type="NCBI Taxonomy" id="103690"/>
    <lineage>
        <taxon>Bacteria</taxon>
        <taxon>Bacillati</taxon>
        <taxon>Cyanobacteriota</taxon>
        <taxon>Cyanophyceae</taxon>
        <taxon>Nostocales</taxon>
        <taxon>Nostocaceae</taxon>
        <taxon>Nostoc</taxon>
    </lineage>
</organism>
<gene>
    <name type="primary">petJ</name>
    <name type="synonym">cytA</name>
    <name type="ordered locus">alr4251</name>
</gene>
<reference key="1">
    <citation type="journal article" date="1994" name="Microbiology">
        <title>Cloning, sequencing and transcriptional studies of the genes for cytochrome c-553 and plastocyanin from Anabaena sp. PCC 7120.</title>
        <authorList>
            <person name="Ghassemian M."/>
            <person name="Wong B."/>
            <person name="Ferreira F."/>
            <person name="Markley J.L."/>
            <person name="Straus N.A."/>
        </authorList>
    </citation>
    <scope>NUCLEOTIDE SEQUENCE [GENOMIC DNA]</scope>
</reference>
<reference key="2">
    <citation type="journal article" date="2001" name="DNA Res.">
        <title>Complete genomic sequence of the filamentous nitrogen-fixing cyanobacterium Anabaena sp. strain PCC 7120.</title>
        <authorList>
            <person name="Kaneko T."/>
            <person name="Nakamura Y."/>
            <person name="Wolk C.P."/>
            <person name="Kuritz T."/>
            <person name="Sasamoto S."/>
            <person name="Watanabe A."/>
            <person name="Iriguchi M."/>
            <person name="Ishikawa A."/>
            <person name="Kawashima K."/>
            <person name="Kimura T."/>
            <person name="Kishida Y."/>
            <person name="Kohara M."/>
            <person name="Matsumoto M."/>
            <person name="Matsuno A."/>
            <person name="Muraki A."/>
            <person name="Nakazaki N."/>
            <person name="Shimpo S."/>
            <person name="Sugimoto M."/>
            <person name="Takazawa M."/>
            <person name="Yamada M."/>
            <person name="Yasuda M."/>
            <person name="Tabata S."/>
        </authorList>
    </citation>
    <scope>NUCLEOTIDE SEQUENCE [LARGE SCALE GENOMIC DNA]</scope>
    <source>
        <strain>PCC 7120 / SAG 25.82 / UTEX 2576</strain>
    </source>
</reference>
<proteinExistence type="evidence at protein level"/>
<dbReference type="EMBL" id="M97009">
    <property type="protein sequence ID" value="AAA59365.1"/>
    <property type="molecule type" value="Genomic_DNA"/>
</dbReference>
<dbReference type="EMBL" id="BA000019">
    <property type="protein sequence ID" value="BAB75950.1"/>
    <property type="molecule type" value="Genomic_DNA"/>
</dbReference>
<dbReference type="PIR" id="AD2337">
    <property type="entry name" value="AD2337"/>
</dbReference>
<dbReference type="PIR" id="I39601">
    <property type="entry name" value="I39601"/>
</dbReference>
<dbReference type="RefSeq" id="WP_010998389.1">
    <property type="nucleotide sequence ID" value="NZ_RSCN01000010.1"/>
</dbReference>
<dbReference type="PDB" id="4GYD">
    <property type="method" value="X-ray"/>
    <property type="resolution" value="1.80 A"/>
    <property type="chains" value="A/B/C/D/E/F=26-111"/>
</dbReference>
<dbReference type="PDB" id="4H0J">
    <property type="method" value="X-ray"/>
    <property type="resolution" value="2.00 A"/>
    <property type="chains" value="A/B/C/D/E/F=26-111"/>
</dbReference>
<dbReference type="PDB" id="4H0K">
    <property type="method" value="X-ray"/>
    <property type="resolution" value="1.95 A"/>
    <property type="chains" value="A/B=26-111"/>
</dbReference>
<dbReference type="PDBsum" id="4GYD"/>
<dbReference type="PDBsum" id="4H0J"/>
<dbReference type="PDBsum" id="4H0K"/>
<dbReference type="SMR" id="P0A3X7"/>
<dbReference type="MINT" id="P0A3X7"/>
<dbReference type="STRING" id="103690.gene:10496300"/>
<dbReference type="TCDB" id="3.D.3.5.6">
    <property type="family name" value="the proton-translocating quinol:cytochrome c reductase (qcr) superfamily"/>
</dbReference>
<dbReference type="KEGG" id="ana:alr4251"/>
<dbReference type="eggNOG" id="COG2010">
    <property type="taxonomic scope" value="Bacteria"/>
</dbReference>
<dbReference type="OrthoDB" id="5570429at2"/>
<dbReference type="EvolutionaryTrace" id="P0A3X7"/>
<dbReference type="Proteomes" id="UP000002483">
    <property type="component" value="Chromosome"/>
</dbReference>
<dbReference type="GO" id="GO:0031979">
    <property type="term" value="C:plasma membrane-derived thylakoid lumen"/>
    <property type="evidence" value="ECO:0007669"/>
    <property type="project" value="UniProtKB-SubCell"/>
</dbReference>
<dbReference type="GO" id="GO:0009055">
    <property type="term" value="F:electron transfer activity"/>
    <property type="evidence" value="ECO:0007669"/>
    <property type="project" value="UniProtKB-UniRule"/>
</dbReference>
<dbReference type="GO" id="GO:0020037">
    <property type="term" value="F:heme binding"/>
    <property type="evidence" value="ECO:0007669"/>
    <property type="project" value="InterPro"/>
</dbReference>
<dbReference type="GO" id="GO:0005506">
    <property type="term" value="F:iron ion binding"/>
    <property type="evidence" value="ECO:0007669"/>
    <property type="project" value="InterPro"/>
</dbReference>
<dbReference type="GO" id="GO:0015979">
    <property type="term" value="P:photosynthesis"/>
    <property type="evidence" value="ECO:0007669"/>
    <property type="project" value="UniProtKB-UniRule"/>
</dbReference>
<dbReference type="FunFam" id="1.10.760.10:FF:000038">
    <property type="entry name" value="Cytochrome c6"/>
    <property type="match status" value="1"/>
</dbReference>
<dbReference type="Gene3D" id="1.10.760.10">
    <property type="entry name" value="Cytochrome c-like domain"/>
    <property type="match status" value="1"/>
</dbReference>
<dbReference type="HAMAP" id="MF_00594">
    <property type="entry name" value="Cytc_PetJ"/>
    <property type="match status" value="1"/>
</dbReference>
<dbReference type="InterPro" id="IPR009056">
    <property type="entry name" value="Cyt_c-like_dom"/>
</dbReference>
<dbReference type="InterPro" id="IPR036909">
    <property type="entry name" value="Cyt_c-like_dom_sf"/>
</dbReference>
<dbReference type="InterPro" id="IPR023655">
    <property type="entry name" value="Cyt_C6"/>
</dbReference>
<dbReference type="InterPro" id="IPR008168">
    <property type="entry name" value="Cyt_C_IC"/>
</dbReference>
<dbReference type="NCBIfam" id="NF045930">
    <property type="entry name" value="Cytc6PetJCyano"/>
    <property type="match status" value="1"/>
</dbReference>
<dbReference type="PANTHER" id="PTHR34688">
    <property type="entry name" value="CYTOCHROME C6, CHLOROPLASTIC"/>
    <property type="match status" value="1"/>
</dbReference>
<dbReference type="PANTHER" id="PTHR34688:SF2">
    <property type="entry name" value="CYTOCHROME C6, CHLOROPLASTIC"/>
    <property type="match status" value="1"/>
</dbReference>
<dbReference type="Pfam" id="PF13442">
    <property type="entry name" value="Cytochrome_CBB3"/>
    <property type="match status" value="1"/>
</dbReference>
<dbReference type="PRINTS" id="PR00605">
    <property type="entry name" value="CYTCHROMECIC"/>
</dbReference>
<dbReference type="SUPFAM" id="SSF46626">
    <property type="entry name" value="Cytochrome c"/>
    <property type="match status" value="1"/>
</dbReference>
<dbReference type="PROSITE" id="PS51007">
    <property type="entry name" value="CYTC"/>
    <property type="match status" value="1"/>
</dbReference>
<feature type="signal peptide" evidence="1">
    <location>
        <begin position="1"/>
        <end position="25"/>
    </location>
</feature>
<feature type="chain" id="PRO_0000023855" description="Cytochrome c6">
    <location>
        <begin position="26"/>
        <end position="111"/>
    </location>
</feature>
<feature type="binding site" description="covalent" evidence="1">
    <location>
        <position position="39"/>
    </location>
    <ligand>
        <name>heme c</name>
        <dbReference type="ChEBI" id="CHEBI:61717"/>
    </ligand>
</feature>
<feature type="binding site" description="covalent" evidence="1">
    <location>
        <position position="42"/>
    </location>
    <ligand>
        <name>heme c</name>
        <dbReference type="ChEBI" id="CHEBI:61717"/>
    </ligand>
</feature>
<feature type="binding site" description="axial binding residue" evidence="1">
    <location>
        <position position="43"/>
    </location>
    <ligand>
        <name>heme c</name>
        <dbReference type="ChEBI" id="CHEBI:61717"/>
    </ligand>
    <ligandPart>
        <name>Fe</name>
        <dbReference type="ChEBI" id="CHEBI:18248"/>
    </ligandPart>
</feature>
<feature type="binding site" description="axial binding residue" evidence="1">
    <location>
        <position position="83"/>
    </location>
    <ligand>
        <name>heme c</name>
        <dbReference type="ChEBI" id="CHEBI:61717"/>
    </ligand>
    <ligandPart>
        <name>Fe</name>
        <dbReference type="ChEBI" id="CHEBI:18248"/>
    </ligandPart>
</feature>
<feature type="helix" evidence="3">
    <location>
        <begin position="28"/>
        <end position="38"/>
    </location>
</feature>
<feature type="helix" evidence="3">
    <location>
        <begin position="40"/>
        <end position="43"/>
    </location>
</feature>
<feature type="helix" evidence="3">
    <location>
        <begin position="44"/>
        <end position="46"/>
    </location>
</feature>
<feature type="strand" evidence="3">
    <location>
        <begin position="49"/>
        <end position="51"/>
    </location>
</feature>
<feature type="helix" evidence="3">
    <location>
        <begin position="58"/>
        <end position="63"/>
    </location>
</feature>
<feature type="helix" evidence="3">
    <location>
        <begin position="69"/>
        <end position="78"/>
    </location>
</feature>
<feature type="turn" evidence="4">
    <location>
        <begin position="87"/>
        <end position="89"/>
    </location>
</feature>
<feature type="helix" evidence="3">
    <location>
        <begin position="92"/>
        <end position="108"/>
    </location>
</feature>